<keyword id="KW-0378">Hydrolase</keyword>
<keyword id="KW-1185">Reference proteome</keyword>
<sequence length="280" mass="31176">MEPILHIQGDAHSSLTPLIFIHAVSGLAWPYMALGNLSNTSDPARSRPVYGISSPVYSSELQPHGPYLLGGWSMGGMIAVKMAEILQAKKETVQQVILLDSINPEKYPAFVNEEEHRIIADGLFTNVCQAMGMADLADDSDDEDNRSDASDASDDGSTMSDEEEEDDNLHRLFSTMRRHIHASTLSISSTEPGKLLPPNSVCHTSVTLVKCTQLSETVPALFSARQRCIRRCALHPTLQWRPQNFDRFRTLLIDARHDSLFDEEHVEEVTSMLRQILESC</sequence>
<dbReference type="EC" id="3.1.-.-" evidence="3"/>
<dbReference type="EMBL" id="AM270218">
    <property type="protein sequence ID" value="CAK48265.1"/>
    <property type="molecule type" value="Genomic_DNA"/>
</dbReference>
<dbReference type="SMR" id="A5ABG7"/>
<dbReference type="ESTHER" id="aspnc-pyni">
    <property type="family name" value="Thioesterase"/>
</dbReference>
<dbReference type="EnsemblFungi" id="CAK48265">
    <property type="protein sequence ID" value="CAK48265"/>
    <property type="gene ID" value="An11g00320"/>
</dbReference>
<dbReference type="VEuPathDB" id="FungiDB:An11g00320"/>
<dbReference type="HOGENOM" id="CLU_057355_0_0_1"/>
<dbReference type="Proteomes" id="UP000006706">
    <property type="component" value="Chromosome 7R"/>
</dbReference>
<dbReference type="GO" id="GO:0016787">
    <property type="term" value="F:hydrolase activity"/>
    <property type="evidence" value="ECO:0007669"/>
    <property type="project" value="UniProtKB-KW"/>
</dbReference>
<dbReference type="GO" id="GO:0009058">
    <property type="term" value="P:biosynthetic process"/>
    <property type="evidence" value="ECO:0007669"/>
    <property type="project" value="InterPro"/>
</dbReference>
<dbReference type="GO" id="GO:0019748">
    <property type="term" value="P:secondary metabolic process"/>
    <property type="evidence" value="ECO:0000317"/>
    <property type="project" value="AspGD"/>
</dbReference>
<dbReference type="FunFam" id="3.40.50.1820:FF:000968">
    <property type="entry name" value="Aspergillus niger contig An11c0010, genomic contig"/>
    <property type="match status" value="1"/>
</dbReference>
<dbReference type="Gene3D" id="3.40.50.1820">
    <property type="entry name" value="alpha/beta hydrolase"/>
    <property type="match status" value="1"/>
</dbReference>
<dbReference type="InterPro" id="IPR029058">
    <property type="entry name" value="AB_hydrolase_fold"/>
</dbReference>
<dbReference type="InterPro" id="IPR001031">
    <property type="entry name" value="Thioesterase"/>
</dbReference>
<dbReference type="Pfam" id="PF00975">
    <property type="entry name" value="Thioesterase"/>
    <property type="match status" value="1"/>
</dbReference>
<dbReference type="SUPFAM" id="SSF53474">
    <property type="entry name" value="alpha/beta-Hydrolases"/>
    <property type="match status" value="1"/>
</dbReference>
<evidence type="ECO:0000256" key="1">
    <source>
        <dbReference type="SAM" id="MobiDB-lite"/>
    </source>
</evidence>
<evidence type="ECO:0000269" key="2">
    <source>
    </source>
</evidence>
<evidence type="ECO:0000269" key="3">
    <source>
    </source>
</evidence>
<evidence type="ECO:0000303" key="4">
    <source>
    </source>
</evidence>
<evidence type="ECO:0000305" key="5"/>
<evidence type="ECO:0000305" key="6">
    <source>
    </source>
</evidence>
<name>PYNI_ASPNC</name>
<feature type="chain" id="PRO_0000450061" description="Thioesterase pynI">
    <location>
        <begin position="1"/>
        <end position="280"/>
    </location>
</feature>
<feature type="region of interest" description="Disordered" evidence="1">
    <location>
        <begin position="136"/>
        <end position="167"/>
    </location>
</feature>
<feature type="compositionally biased region" description="Acidic residues" evidence="1">
    <location>
        <begin position="136"/>
        <end position="145"/>
    </location>
</feature>
<reference key="1">
    <citation type="journal article" date="2007" name="Nat. Biotechnol.">
        <title>Genome sequencing and analysis of the versatile cell factory Aspergillus niger CBS 513.88.</title>
        <authorList>
            <person name="Pel H.J."/>
            <person name="de Winde J.H."/>
            <person name="Archer D.B."/>
            <person name="Dyer P.S."/>
            <person name="Hofmann G."/>
            <person name="Schaap P.J."/>
            <person name="Turner G."/>
            <person name="de Vries R.P."/>
            <person name="Albang R."/>
            <person name="Albermann K."/>
            <person name="Andersen M.R."/>
            <person name="Bendtsen J.D."/>
            <person name="Benen J.A.E."/>
            <person name="van den Berg M."/>
            <person name="Breestraat S."/>
            <person name="Caddick M.X."/>
            <person name="Contreras R."/>
            <person name="Cornell M."/>
            <person name="Coutinho P.M."/>
            <person name="Danchin E.G.J."/>
            <person name="Debets A.J.M."/>
            <person name="Dekker P."/>
            <person name="van Dijck P.W.M."/>
            <person name="van Dijk A."/>
            <person name="Dijkhuizen L."/>
            <person name="Driessen A.J.M."/>
            <person name="d'Enfert C."/>
            <person name="Geysens S."/>
            <person name="Goosen C."/>
            <person name="Groot G.S.P."/>
            <person name="de Groot P.W.J."/>
            <person name="Guillemette T."/>
            <person name="Henrissat B."/>
            <person name="Herweijer M."/>
            <person name="van den Hombergh J.P.T.W."/>
            <person name="van den Hondel C.A.M.J.J."/>
            <person name="van der Heijden R.T.J.M."/>
            <person name="van der Kaaij R.M."/>
            <person name="Klis F.M."/>
            <person name="Kools H.J."/>
            <person name="Kubicek C.P."/>
            <person name="van Kuyk P.A."/>
            <person name="Lauber J."/>
            <person name="Lu X."/>
            <person name="van der Maarel M.J.E.C."/>
            <person name="Meulenberg R."/>
            <person name="Menke H."/>
            <person name="Mortimer M.A."/>
            <person name="Nielsen J."/>
            <person name="Oliver S.G."/>
            <person name="Olsthoorn M."/>
            <person name="Pal K."/>
            <person name="van Peij N.N.M.E."/>
            <person name="Ram A.F.J."/>
            <person name="Rinas U."/>
            <person name="Roubos J.A."/>
            <person name="Sagt C.M.J."/>
            <person name="Schmoll M."/>
            <person name="Sun J."/>
            <person name="Ussery D."/>
            <person name="Varga J."/>
            <person name="Vervecken W."/>
            <person name="van de Vondervoort P.J.J."/>
            <person name="Wedler H."/>
            <person name="Woesten H.A.B."/>
            <person name="Zeng A.-P."/>
            <person name="van Ooyen A.J.J."/>
            <person name="Visser J."/>
            <person name="Stam H."/>
        </authorList>
    </citation>
    <scope>NUCLEOTIDE SEQUENCE [LARGE SCALE GENOMIC DNA]</scope>
    <source>
        <strain>ATCC MYA-4892 / CBS 513.88 / FGSC A1513</strain>
    </source>
</reference>
<reference key="2">
    <citation type="journal article" date="2013" name="ChemBioChem">
        <title>Pyranonigrin E: a PKS-NRPS hybrid metabolite from Aspergillus niger identified by genome mining.</title>
        <authorList>
            <person name="Awakawa T."/>
            <person name="Yang X.L."/>
            <person name="Wakimoto T."/>
            <person name="Abe I."/>
        </authorList>
    </citation>
    <scope>FUNCTION</scope>
</reference>
<reference key="3">
    <citation type="journal article" date="2015" name="Org. Lett.">
        <title>Elucidation of pyranonigrin biosynthetic pathway reveals a mode of tetramic acid, fused gamma-pyrone, and exo-methylene formation.</title>
        <authorList>
            <person name="Yamamoto T."/>
            <person name="Tsunematsu Y."/>
            <person name="Noguchi H."/>
            <person name="Hotta K."/>
            <person name="Watanabe K."/>
        </authorList>
    </citation>
    <scope>FUNCTION</scope>
    <scope>DISRUPTION PHENOTYPE</scope>
    <scope>CATALYTIC ACTIVITY</scope>
    <scope>PATHWAY</scope>
</reference>
<gene>
    <name evidence="4" type="primary">pynI</name>
    <name type="ORF">An11g00320</name>
</gene>
<comment type="function">
    <text evidence="2 3 6">Thioesterase; part of the gene cluster that mediates the biosynthesis of pyranonigrins, a family of antioxidative compounds (PubMed:24106156). The first step of pyranonigrins biosynthesis is performed by the hybrid PKS-NRPS synthetase that condenses 6 malonyl-CoA units to an acetyl starter unit, to form a 1,3,5-trioxotetradecane-6,8-dienyl-ACP (PubMed:24106156). The enoyl reductase (ER) domain of pynA is likely to be functional during the first two rounds of polyketide chain extension, to generate the saturated C-C bonds of the alkyl side chain (Probable). PynA subsequently forms the amide bond between the acyl chain and L-serine (PubMed:24106156, PubMed:26414728). Although pynA has a terminal reductase domain, it appears to require the thioesterase pynI for the release of the straight-chain intermediate from pynA via the formation of a tetramic acid pyranonigrin J (PubMed:26414728). The methyltransferase pynC then coverts pyranonigrin J to pyranonigrin I via N-methylation (PubMed:26414728). The FAD-dependent monooxygenase pynG catalyzes an epoxidation-mediated cyclization to form the dihydro-gamma-pyrone moiety, followed by pynD-catalyzed oxidation of the alcohol to the ketone and enolization to yield the characteristic tetramic acid-fused gamma-pyrone core of pyranonigrin H (PubMed:26414728). Pyranonigrin H is substrate of pynH for dehydration-mediated exo-methylene formation from the serine side chain to produce pyranonigrin E, before the oxidase pynE reduces the exo-methylene of pyranonigrin E into a pendant methyl to form pyranonigrin G (PubMed:26414728). The FAD-linked oxidoreductase pynB performs the reverse reaction and converts pyranonigrin G back to pyranonigrin E (PubMed:26414728).</text>
</comment>
<comment type="pathway">
    <text evidence="3">Secondary metabolite biosynthesis.</text>
</comment>
<comment type="disruption phenotype">
    <text evidence="3">Aabolishes the production of all pyranonigrins.</text>
</comment>
<comment type="similarity">
    <text evidence="5">Belongs to the AMT4 thioesterase family.</text>
</comment>
<accession>A5ABG7</accession>
<organism>
    <name type="scientific">Aspergillus niger (strain ATCC MYA-4892 / CBS 513.88 / FGSC A1513)</name>
    <dbReference type="NCBI Taxonomy" id="425011"/>
    <lineage>
        <taxon>Eukaryota</taxon>
        <taxon>Fungi</taxon>
        <taxon>Dikarya</taxon>
        <taxon>Ascomycota</taxon>
        <taxon>Pezizomycotina</taxon>
        <taxon>Eurotiomycetes</taxon>
        <taxon>Eurotiomycetidae</taxon>
        <taxon>Eurotiales</taxon>
        <taxon>Aspergillaceae</taxon>
        <taxon>Aspergillus</taxon>
        <taxon>Aspergillus subgen. Circumdati</taxon>
    </lineage>
</organism>
<proteinExistence type="evidence at protein level"/>
<protein>
    <recommendedName>
        <fullName evidence="4">Thioesterase pynI</fullName>
        <ecNumber evidence="3">3.1.-.-</ecNumber>
    </recommendedName>
    <alternativeName>
        <fullName evidence="4">Pyranonigrin biosynthesis cluster protein I</fullName>
    </alternativeName>
</protein>